<organismHost>
    <name type="scientific">Magallana gigas</name>
    <name type="common">Pacific oyster</name>
    <name type="synonym">Crassostrea gigas</name>
    <dbReference type="NCBI Taxonomy" id="29159"/>
</organismHost>
<organismHost>
    <name type="scientific">Pecten maximus</name>
    <name type="common">King scallop</name>
    <name type="synonym">Pilgrim's clam</name>
    <dbReference type="NCBI Taxonomy" id="6579"/>
</organismHost>
<dbReference type="EMBL" id="AY509253">
    <property type="protein sequence ID" value="AAS00902.1"/>
    <property type="molecule type" value="Genomic_DNA"/>
</dbReference>
<dbReference type="RefSeq" id="YP_024555.1">
    <property type="nucleotide sequence ID" value="NC_005881.2"/>
</dbReference>
<dbReference type="KEGG" id="vg:2948174"/>
<dbReference type="Proteomes" id="UP000007021">
    <property type="component" value="Segment"/>
</dbReference>
<name>Y010_OSHVF</name>
<protein>
    <recommendedName>
        <fullName>Uncharacterized protein ORF10</fullName>
    </recommendedName>
</protein>
<accession>Q6R7L3</accession>
<feature type="chain" id="PRO_0000385043" description="Uncharacterized protein ORF10">
    <location>
        <begin position="1"/>
        <end position="342"/>
    </location>
</feature>
<sequence>MQSYTELVKLTEALMGARTSGIVKSSEHNCKICRSVIPLDDKNKIISILMAIKENVQLEMPEDIADVKLLDFLLFWKGKIEYSTVINELFNAHKGYFHHCYMVDIIAKRYARKLYKPESLEENKEWLALATKAGFMADSFFRKNNLYDLLHELTGKDVRPMIADDNLEKLTNMSASSESEIINNLIPMQLPQILALFEQILQKGAPKVVIEADGCVKVNHCIFETKTADNKVLIKIGMPIEYEHYNSFQSSYYGNGICRGSKHKMNVNVGRIYRAVKAVAPQVTFNFYSMKEETCQEVCGCVEKQCEIAKCAVEGIPFIPKELRAIPISKITRRGSMDMDIM</sequence>
<reference key="1">
    <citation type="journal article" date="2005" name="J. Gen. Virol.">
        <title>A novel class of herpesvirus with bivalve hosts.</title>
        <authorList>
            <person name="Davison A.J."/>
            <person name="Trus B.L."/>
            <person name="Cheng N."/>
            <person name="Steven A.C."/>
            <person name="Watson M.S."/>
            <person name="Cunningham C."/>
            <person name="Le Deuff R.M."/>
            <person name="Renault T."/>
        </authorList>
    </citation>
    <scope>NUCLEOTIDE SEQUENCE [LARGE SCALE GENOMIC DNA]</scope>
</reference>
<gene>
    <name type="ORF">ORF10</name>
</gene>
<keyword id="KW-1185">Reference proteome</keyword>
<organism>
    <name type="scientific">Ostreid herpesvirus 1 (isolate France)</name>
    <name type="common">OsHV-1</name>
    <name type="synonym">Pacific oyster herpesvirus</name>
    <dbReference type="NCBI Taxonomy" id="654903"/>
    <lineage>
        <taxon>Viruses</taxon>
        <taxon>Duplodnaviria</taxon>
        <taxon>Heunggongvirae</taxon>
        <taxon>Peploviricota</taxon>
        <taxon>Herviviricetes</taxon>
        <taxon>Herpesvirales</taxon>
        <taxon>Malacoherpesviridae</taxon>
        <taxon>Ostreavirus</taxon>
        <taxon>Ostreavirus ostreidmalaco1</taxon>
        <taxon>Ostreid herpesvirus 1</taxon>
    </lineage>
</organism>
<proteinExistence type="predicted"/>